<reference key="1">
    <citation type="journal article" date="2001" name="Lancet">
        <title>Whole genome sequencing of meticillin-resistant Staphylococcus aureus.</title>
        <authorList>
            <person name="Kuroda M."/>
            <person name="Ohta T."/>
            <person name="Uchiyama I."/>
            <person name="Baba T."/>
            <person name="Yuzawa H."/>
            <person name="Kobayashi I."/>
            <person name="Cui L."/>
            <person name="Oguchi A."/>
            <person name="Aoki K."/>
            <person name="Nagai Y."/>
            <person name="Lian J.-Q."/>
            <person name="Ito T."/>
            <person name="Kanamori M."/>
            <person name="Matsumaru H."/>
            <person name="Maruyama A."/>
            <person name="Murakami H."/>
            <person name="Hosoyama A."/>
            <person name="Mizutani-Ui Y."/>
            <person name="Takahashi N.K."/>
            <person name="Sawano T."/>
            <person name="Inoue R."/>
            <person name="Kaito C."/>
            <person name="Sekimizu K."/>
            <person name="Hirakawa H."/>
            <person name="Kuhara S."/>
            <person name="Goto S."/>
            <person name="Yabuzaki J."/>
            <person name="Kanehisa M."/>
            <person name="Yamashita A."/>
            <person name="Oshima K."/>
            <person name="Furuya K."/>
            <person name="Yoshino C."/>
            <person name="Shiba T."/>
            <person name="Hattori M."/>
            <person name="Ogasawara N."/>
            <person name="Hayashi H."/>
            <person name="Hiramatsu K."/>
        </authorList>
    </citation>
    <scope>NUCLEOTIDE SEQUENCE [LARGE SCALE GENOMIC DNA]</scope>
    <source>
        <strain>N315</strain>
    </source>
</reference>
<reference key="2">
    <citation type="submission" date="2007-10" db="UniProtKB">
        <title>Shotgun proteomic analysis of total and membrane protein extracts of S. aureus strain N315.</title>
        <authorList>
            <person name="Vaezzadeh A.R."/>
            <person name="Deshusses J."/>
            <person name="Lescuyer P."/>
            <person name="Hochstrasser D.F."/>
        </authorList>
    </citation>
    <scope>IDENTIFICATION BY MASS SPECTROMETRY [LARGE SCALE ANALYSIS]</scope>
    <source>
        <strain>N315</strain>
    </source>
</reference>
<comment type="catalytic activity">
    <reaction evidence="1">
        <text>thymidine + ATP = dTMP + ADP + H(+)</text>
        <dbReference type="Rhea" id="RHEA:19129"/>
        <dbReference type="ChEBI" id="CHEBI:15378"/>
        <dbReference type="ChEBI" id="CHEBI:17748"/>
        <dbReference type="ChEBI" id="CHEBI:30616"/>
        <dbReference type="ChEBI" id="CHEBI:63528"/>
        <dbReference type="ChEBI" id="CHEBI:456216"/>
        <dbReference type="EC" id="2.7.1.21"/>
    </reaction>
</comment>
<comment type="subunit">
    <text evidence="1">Homotetramer.</text>
</comment>
<comment type="subcellular location">
    <subcellularLocation>
        <location evidence="1">Cytoplasm</location>
    </subcellularLocation>
</comment>
<comment type="similarity">
    <text evidence="1">Belongs to the thymidine kinase family.</text>
</comment>
<accession>P65231</accession>
<accession>Q99SD9</accession>
<proteinExistence type="evidence at protein level"/>
<organism>
    <name type="scientific">Staphylococcus aureus (strain N315)</name>
    <dbReference type="NCBI Taxonomy" id="158879"/>
    <lineage>
        <taxon>Bacteria</taxon>
        <taxon>Bacillati</taxon>
        <taxon>Bacillota</taxon>
        <taxon>Bacilli</taxon>
        <taxon>Bacillales</taxon>
        <taxon>Staphylococcaceae</taxon>
        <taxon>Staphylococcus</taxon>
    </lineage>
</organism>
<keyword id="KW-0067">ATP-binding</keyword>
<keyword id="KW-0963">Cytoplasm</keyword>
<keyword id="KW-0237">DNA synthesis</keyword>
<keyword id="KW-0418">Kinase</keyword>
<keyword id="KW-0479">Metal-binding</keyword>
<keyword id="KW-0547">Nucleotide-binding</keyword>
<keyword id="KW-0808">Transferase</keyword>
<keyword id="KW-0862">Zinc</keyword>
<protein>
    <recommendedName>
        <fullName evidence="1">Thymidine kinase</fullName>
        <ecNumber evidence="1">2.7.1.21</ecNumber>
    </recommendedName>
</protein>
<feature type="chain" id="PRO_0000175020" description="Thymidine kinase">
    <location>
        <begin position="1"/>
        <end position="199"/>
    </location>
</feature>
<feature type="active site" description="Proton acceptor" evidence="1">
    <location>
        <position position="89"/>
    </location>
</feature>
<feature type="binding site" evidence="1">
    <location>
        <begin position="15"/>
        <end position="22"/>
    </location>
    <ligand>
        <name>ATP</name>
        <dbReference type="ChEBI" id="CHEBI:30616"/>
    </ligand>
</feature>
<feature type="binding site" evidence="1">
    <location>
        <begin position="88"/>
        <end position="91"/>
    </location>
    <ligand>
        <name>ATP</name>
        <dbReference type="ChEBI" id="CHEBI:30616"/>
    </ligand>
</feature>
<feature type="binding site" evidence="1">
    <location>
        <position position="145"/>
    </location>
    <ligand>
        <name>Zn(2+)</name>
        <dbReference type="ChEBI" id="CHEBI:29105"/>
    </ligand>
</feature>
<feature type="binding site" evidence="1">
    <location>
        <position position="148"/>
    </location>
    <ligand>
        <name>Zn(2+)</name>
        <dbReference type="ChEBI" id="CHEBI:29105"/>
    </ligand>
</feature>
<feature type="binding site" evidence="1">
    <location>
        <position position="183"/>
    </location>
    <ligand>
        <name>Zn(2+)</name>
        <dbReference type="ChEBI" id="CHEBI:29105"/>
    </ligand>
</feature>
<feature type="binding site" evidence="1">
    <location>
        <position position="186"/>
    </location>
    <ligand>
        <name>Zn(2+)</name>
        <dbReference type="ChEBI" id="CHEBI:29105"/>
    </ligand>
</feature>
<evidence type="ECO:0000255" key="1">
    <source>
        <dbReference type="HAMAP-Rule" id="MF_00124"/>
    </source>
</evidence>
<sequence length="199" mass="22213">MYETYHSGWIECITGSMFSGKSEELIRRLRRGIYAKQKVVVFKPAIDDRYHKEKVVSHNGNAIEAINISKASEIMTHNLTNVDVIGIDEVQFFDDEIVSIVEKLSADGHRVIVAGLDMDFRGEPFEPMPKLMAVSEQVTKLQAVCAVCGSSSSRTQRLINGKPAKIDDPIILVGANESYEPRCRAHHIVAPSDNNKEEL</sequence>
<name>KITH_STAAN</name>
<gene>
    <name evidence="1" type="primary">tdk</name>
    <name type="ordered locus">SA1921</name>
</gene>
<dbReference type="EC" id="2.7.1.21" evidence="1"/>
<dbReference type="EMBL" id="BA000018">
    <property type="protein sequence ID" value="BAB43205.1"/>
    <property type="molecule type" value="Genomic_DNA"/>
</dbReference>
<dbReference type="PIR" id="D90005">
    <property type="entry name" value="D90005"/>
</dbReference>
<dbReference type="RefSeq" id="WP_000273358.1">
    <property type="nucleotide sequence ID" value="NC_002745.2"/>
</dbReference>
<dbReference type="SMR" id="P65231"/>
<dbReference type="EnsemblBacteria" id="BAB43205">
    <property type="protein sequence ID" value="BAB43205"/>
    <property type="gene ID" value="BAB43205"/>
</dbReference>
<dbReference type="KEGG" id="sau:SA1921"/>
<dbReference type="HOGENOM" id="CLU_064400_3_0_9"/>
<dbReference type="GO" id="GO:0005829">
    <property type="term" value="C:cytosol"/>
    <property type="evidence" value="ECO:0007669"/>
    <property type="project" value="TreeGrafter"/>
</dbReference>
<dbReference type="GO" id="GO:0005524">
    <property type="term" value="F:ATP binding"/>
    <property type="evidence" value="ECO:0007669"/>
    <property type="project" value="UniProtKB-UniRule"/>
</dbReference>
<dbReference type="GO" id="GO:0004797">
    <property type="term" value="F:thymidine kinase activity"/>
    <property type="evidence" value="ECO:0007669"/>
    <property type="project" value="UniProtKB-UniRule"/>
</dbReference>
<dbReference type="GO" id="GO:0008270">
    <property type="term" value="F:zinc ion binding"/>
    <property type="evidence" value="ECO:0007669"/>
    <property type="project" value="UniProtKB-UniRule"/>
</dbReference>
<dbReference type="GO" id="GO:0071897">
    <property type="term" value="P:DNA biosynthetic process"/>
    <property type="evidence" value="ECO:0007669"/>
    <property type="project" value="UniProtKB-KW"/>
</dbReference>
<dbReference type="GO" id="GO:0046104">
    <property type="term" value="P:thymidine metabolic process"/>
    <property type="evidence" value="ECO:0007669"/>
    <property type="project" value="TreeGrafter"/>
</dbReference>
<dbReference type="FunFam" id="3.30.60.20:FF:000026">
    <property type="entry name" value="Thymidine kinase"/>
    <property type="match status" value="1"/>
</dbReference>
<dbReference type="FunFam" id="3.40.50.300:FF:000384">
    <property type="entry name" value="Thymidine kinase"/>
    <property type="match status" value="1"/>
</dbReference>
<dbReference type="Gene3D" id="3.30.60.20">
    <property type="match status" value="1"/>
</dbReference>
<dbReference type="Gene3D" id="3.40.50.300">
    <property type="entry name" value="P-loop containing nucleotide triphosphate hydrolases"/>
    <property type="match status" value="1"/>
</dbReference>
<dbReference type="HAMAP" id="MF_00124">
    <property type="entry name" value="Thymidine_kinase"/>
    <property type="match status" value="1"/>
</dbReference>
<dbReference type="InterPro" id="IPR027417">
    <property type="entry name" value="P-loop_NTPase"/>
</dbReference>
<dbReference type="InterPro" id="IPR001267">
    <property type="entry name" value="Thymidine_kinase"/>
</dbReference>
<dbReference type="InterPro" id="IPR020633">
    <property type="entry name" value="Thymidine_kinase_CS"/>
</dbReference>
<dbReference type="NCBIfam" id="NF003296">
    <property type="entry name" value="PRK04296.1-1"/>
    <property type="match status" value="1"/>
</dbReference>
<dbReference type="PANTHER" id="PTHR11441">
    <property type="entry name" value="THYMIDINE KINASE"/>
    <property type="match status" value="1"/>
</dbReference>
<dbReference type="PANTHER" id="PTHR11441:SF0">
    <property type="entry name" value="THYMIDINE KINASE, CYTOSOLIC"/>
    <property type="match status" value="1"/>
</dbReference>
<dbReference type="Pfam" id="PF00265">
    <property type="entry name" value="TK"/>
    <property type="match status" value="1"/>
</dbReference>
<dbReference type="PIRSF" id="PIRSF035805">
    <property type="entry name" value="TK_cell"/>
    <property type="match status" value="1"/>
</dbReference>
<dbReference type="SUPFAM" id="SSF57716">
    <property type="entry name" value="Glucocorticoid receptor-like (DNA-binding domain)"/>
    <property type="match status" value="1"/>
</dbReference>
<dbReference type="SUPFAM" id="SSF52540">
    <property type="entry name" value="P-loop containing nucleoside triphosphate hydrolases"/>
    <property type="match status" value="1"/>
</dbReference>
<dbReference type="PROSITE" id="PS00603">
    <property type="entry name" value="TK_CELLULAR_TYPE"/>
    <property type="match status" value="1"/>
</dbReference>